<accession>A8F982</accession>
<reference key="1">
    <citation type="journal article" date="2007" name="PLoS ONE">
        <title>Paradoxical DNA repair and peroxide resistance gene conservation in Bacillus pumilus SAFR-032.</title>
        <authorList>
            <person name="Gioia J."/>
            <person name="Yerrapragada S."/>
            <person name="Qin X."/>
            <person name="Jiang H."/>
            <person name="Igboeli O.C."/>
            <person name="Muzny D."/>
            <person name="Dugan-Rocha S."/>
            <person name="Ding Y."/>
            <person name="Hawes A."/>
            <person name="Liu W."/>
            <person name="Perez L."/>
            <person name="Kovar C."/>
            <person name="Dinh H."/>
            <person name="Lee S."/>
            <person name="Nazareth L."/>
            <person name="Blyth P."/>
            <person name="Holder M."/>
            <person name="Buhay C."/>
            <person name="Tirumalai M.R."/>
            <person name="Liu Y."/>
            <person name="Dasgupta I."/>
            <person name="Bokhetache L."/>
            <person name="Fujita M."/>
            <person name="Karouia F."/>
            <person name="Eswara Moorthy P."/>
            <person name="Siefert J."/>
            <person name="Uzman A."/>
            <person name="Buzumbo P."/>
            <person name="Verma A."/>
            <person name="Zwiya H."/>
            <person name="McWilliams B.D."/>
            <person name="Olowu A."/>
            <person name="Clinkenbeard K.D."/>
            <person name="Newcombe D."/>
            <person name="Golebiewski L."/>
            <person name="Petrosino J.F."/>
            <person name="Nicholson W.L."/>
            <person name="Fox G.E."/>
            <person name="Venkateswaran K."/>
            <person name="Highlander S.K."/>
            <person name="Weinstock G.M."/>
        </authorList>
    </citation>
    <scope>NUCLEOTIDE SEQUENCE [LARGE SCALE GENOMIC DNA]</scope>
    <source>
        <strain>SAFR-032</strain>
    </source>
</reference>
<proteinExistence type="inferred from homology"/>
<organism>
    <name type="scientific">Bacillus pumilus (strain SAFR-032)</name>
    <dbReference type="NCBI Taxonomy" id="315750"/>
    <lineage>
        <taxon>Bacteria</taxon>
        <taxon>Bacillati</taxon>
        <taxon>Bacillota</taxon>
        <taxon>Bacilli</taxon>
        <taxon>Bacillales</taxon>
        <taxon>Bacillaceae</taxon>
        <taxon>Bacillus</taxon>
    </lineage>
</organism>
<feature type="chain" id="PRO_1000057790" description="Elongation factor Tu">
    <location>
        <begin position="1"/>
        <end position="396"/>
    </location>
</feature>
<feature type="domain" description="tr-type G">
    <location>
        <begin position="10"/>
        <end position="205"/>
    </location>
</feature>
<feature type="region of interest" description="G1" evidence="1">
    <location>
        <begin position="19"/>
        <end position="26"/>
    </location>
</feature>
<feature type="region of interest" description="G2" evidence="1">
    <location>
        <begin position="61"/>
        <end position="65"/>
    </location>
</feature>
<feature type="region of interest" description="G3" evidence="1">
    <location>
        <begin position="82"/>
        <end position="85"/>
    </location>
</feature>
<feature type="region of interest" description="G4" evidence="1">
    <location>
        <begin position="137"/>
        <end position="140"/>
    </location>
</feature>
<feature type="region of interest" description="G5" evidence="1">
    <location>
        <begin position="175"/>
        <end position="177"/>
    </location>
</feature>
<feature type="binding site" evidence="2">
    <location>
        <begin position="19"/>
        <end position="26"/>
    </location>
    <ligand>
        <name>GTP</name>
        <dbReference type="ChEBI" id="CHEBI:37565"/>
    </ligand>
</feature>
<feature type="binding site" evidence="2">
    <location>
        <position position="26"/>
    </location>
    <ligand>
        <name>Mg(2+)</name>
        <dbReference type="ChEBI" id="CHEBI:18420"/>
    </ligand>
</feature>
<feature type="binding site" evidence="2">
    <location>
        <begin position="82"/>
        <end position="86"/>
    </location>
    <ligand>
        <name>GTP</name>
        <dbReference type="ChEBI" id="CHEBI:37565"/>
    </ligand>
</feature>
<feature type="binding site" evidence="2">
    <location>
        <begin position="137"/>
        <end position="140"/>
    </location>
    <ligand>
        <name>GTP</name>
        <dbReference type="ChEBI" id="CHEBI:37565"/>
    </ligand>
</feature>
<keyword id="KW-0963">Cytoplasm</keyword>
<keyword id="KW-0251">Elongation factor</keyword>
<keyword id="KW-0342">GTP-binding</keyword>
<keyword id="KW-0378">Hydrolase</keyword>
<keyword id="KW-0460">Magnesium</keyword>
<keyword id="KW-0479">Metal-binding</keyword>
<keyword id="KW-0547">Nucleotide-binding</keyword>
<keyword id="KW-0648">Protein biosynthesis</keyword>
<evidence type="ECO:0000250" key="1"/>
<evidence type="ECO:0000255" key="2">
    <source>
        <dbReference type="HAMAP-Rule" id="MF_00118"/>
    </source>
</evidence>
<dbReference type="EC" id="3.6.5.3" evidence="2"/>
<dbReference type="EMBL" id="CP000813">
    <property type="protein sequence ID" value="ABV60799.1"/>
    <property type="molecule type" value="Genomic_DNA"/>
</dbReference>
<dbReference type="RefSeq" id="WP_012008701.1">
    <property type="nucleotide sequence ID" value="NZ_VEIS01000020.1"/>
</dbReference>
<dbReference type="SMR" id="A8F982"/>
<dbReference type="STRING" id="315750.BPUM_0099"/>
<dbReference type="GeneID" id="5619341"/>
<dbReference type="KEGG" id="bpu:BPUM_0099"/>
<dbReference type="eggNOG" id="COG0050">
    <property type="taxonomic scope" value="Bacteria"/>
</dbReference>
<dbReference type="HOGENOM" id="CLU_007265_0_1_9"/>
<dbReference type="OrthoDB" id="9804504at2"/>
<dbReference type="Proteomes" id="UP000001355">
    <property type="component" value="Chromosome"/>
</dbReference>
<dbReference type="GO" id="GO:0005829">
    <property type="term" value="C:cytosol"/>
    <property type="evidence" value="ECO:0007669"/>
    <property type="project" value="TreeGrafter"/>
</dbReference>
<dbReference type="GO" id="GO:0005525">
    <property type="term" value="F:GTP binding"/>
    <property type="evidence" value="ECO:0007669"/>
    <property type="project" value="UniProtKB-UniRule"/>
</dbReference>
<dbReference type="GO" id="GO:0003924">
    <property type="term" value="F:GTPase activity"/>
    <property type="evidence" value="ECO:0007669"/>
    <property type="project" value="InterPro"/>
</dbReference>
<dbReference type="GO" id="GO:0003746">
    <property type="term" value="F:translation elongation factor activity"/>
    <property type="evidence" value="ECO:0007669"/>
    <property type="project" value="UniProtKB-UniRule"/>
</dbReference>
<dbReference type="CDD" id="cd01884">
    <property type="entry name" value="EF_Tu"/>
    <property type="match status" value="1"/>
</dbReference>
<dbReference type="CDD" id="cd03697">
    <property type="entry name" value="EFTU_II"/>
    <property type="match status" value="1"/>
</dbReference>
<dbReference type="CDD" id="cd03707">
    <property type="entry name" value="EFTU_III"/>
    <property type="match status" value="1"/>
</dbReference>
<dbReference type="FunFam" id="2.40.30.10:FF:000001">
    <property type="entry name" value="Elongation factor Tu"/>
    <property type="match status" value="1"/>
</dbReference>
<dbReference type="FunFam" id="3.40.50.300:FF:000003">
    <property type="entry name" value="Elongation factor Tu"/>
    <property type="match status" value="1"/>
</dbReference>
<dbReference type="Gene3D" id="3.40.50.300">
    <property type="entry name" value="P-loop containing nucleotide triphosphate hydrolases"/>
    <property type="match status" value="1"/>
</dbReference>
<dbReference type="Gene3D" id="2.40.30.10">
    <property type="entry name" value="Translation factors"/>
    <property type="match status" value="2"/>
</dbReference>
<dbReference type="HAMAP" id="MF_00118_B">
    <property type="entry name" value="EF_Tu_B"/>
    <property type="match status" value="1"/>
</dbReference>
<dbReference type="InterPro" id="IPR041709">
    <property type="entry name" value="EF-Tu_GTP-bd"/>
</dbReference>
<dbReference type="InterPro" id="IPR050055">
    <property type="entry name" value="EF-Tu_GTPase"/>
</dbReference>
<dbReference type="InterPro" id="IPR004161">
    <property type="entry name" value="EFTu-like_2"/>
</dbReference>
<dbReference type="InterPro" id="IPR033720">
    <property type="entry name" value="EFTU_2"/>
</dbReference>
<dbReference type="InterPro" id="IPR031157">
    <property type="entry name" value="G_TR_CS"/>
</dbReference>
<dbReference type="InterPro" id="IPR027417">
    <property type="entry name" value="P-loop_NTPase"/>
</dbReference>
<dbReference type="InterPro" id="IPR005225">
    <property type="entry name" value="Small_GTP-bd"/>
</dbReference>
<dbReference type="InterPro" id="IPR000795">
    <property type="entry name" value="T_Tr_GTP-bd_dom"/>
</dbReference>
<dbReference type="InterPro" id="IPR009000">
    <property type="entry name" value="Transl_B-barrel_sf"/>
</dbReference>
<dbReference type="InterPro" id="IPR009001">
    <property type="entry name" value="Transl_elong_EF1A/Init_IF2_C"/>
</dbReference>
<dbReference type="InterPro" id="IPR004541">
    <property type="entry name" value="Transl_elong_EFTu/EF1A_bac/org"/>
</dbReference>
<dbReference type="InterPro" id="IPR004160">
    <property type="entry name" value="Transl_elong_EFTu/EF1A_C"/>
</dbReference>
<dbReference type="NCBIfam" id="TIGR00485">
    <property type="entry name" value="EF-Tu"/>
    <property type="match status" value="1"/>
</dbReference>
<dbReference type="NCBIfam" id="NF000766">
    <property type="entry name" value="PRK00049.1"/>
    <property type="match status" value="1"/>
</dbReference>
<dbReference type="NCBIfam" id="NF009372">
    <property type="entry name" value="PRK12735.1"/>
    <property type="match status" value="1"/>
</dbReference>
<dbReference type="NCBIfam" id="NF009373">
    <property type="entry name" value="PRK12736.1"/>
    <property type="match status" value="1"/>
</dbReference>
<dbReference type="NCBIfam" id="TIGR00231">
    <property type="entry name" value="small_GTP"/>
    <property type="match status" value="1"/>
</dbReference>
<dbReference type="PANTHER" id="PTHR43721:SF22">
    <property type="entry name" value="ELONGATION FACTOR TU, MITOCHONDRIAL"/>
    <property type="match status" value="1"/>
</dbReference>
<dbReference type="PANTHER" id="PTHR43721">
    <property type="entry name" value="ELONGATION FACTOR TU-RELATED"/>
    <property type="match status" value="1"/>
</dbReference>
<dbReference type="Pfam" id="PF00009">
    <property type="entry name" value="GTP_EFTU"/>
    <property type="match status" value="1"/>
</dbReference>
<dbReference type="Pfam" id="PF03144">
    <property type="entry name" value="GTP_EFTU_D2"/>
    <property type="match status" value="1"/>
</dbReference>
<dbReference type="Pfam" id="PF03143">
    <property type="entry name" value="GTP_EFTU_D3"/>
    <property type="match status" value="1"/>
</dbReference>
<dbReference type="PRINTS" id="PR00315">
    <property type="entry name" value="ELONGATNFCT"/>
</dbReference>
<dbReference type="SUPFAM" id="SSF50465">
    <property type="entry name" value="EF-Tu/eEF-1alpha/eIF2-gamma C-terminal domain"/>
    <property type="match status" value="1"/>
</dbReference>
<dbReference type="SUPFAM" id="SSF52540">
    <property type="entry name" value="P-loop containing nucleoside triphosphate hydrolases"/>
    <property type="match status" value="1"/>
</dbReference>
<dbReference type="SUPFAM" id="SSF50447">
    <property type="entry name" value="Translation proteins"/>
    <property type="match status" value="1"/>
</dbReference>
<dbReference type="PROSITE" id="PS00301">
    <property type="entry name" value="G_TR_1"/>
    <property type="match status" value="1"/>
</dbReference>
<dbReference type="PROSITE" id="PS51722">
    <property type="entry name" value="G_TR_2"/>
    <property type="match status" value="1"/>
</dbReference>
<protein>
    <recommendedName>
        <fullName evidence="2">Elongation factor Tu</fullName>
        <shortName evidence="2">EF-Tu</shortName>
        <ecNumber evidence="2">3.6.5.3</ecNumber>
    </recommendedName>
</protein>
<gene>
    <name evidence="2" type="primary">tuf</name>
    <name type="ordered locus">BPUM_0099</name>
</gene>
<name>EFTU_BACP2</name>
<sequence length="396" mass="43497">MAKEKFDRSKSHANIGTIGHVDHGKTTLTAAISTVLHKKSGKGTAMAYDQIDGAPEERERGITISTAHVEYETETRHYAHVDCPGHADYVKNMITGAAQMDGAILVVSAADGPMPQTREHILLSRNVGVPYIVVFLNKCDMVDDEELLELVEMEVRDLLSDYDFPGDDVPVIKGSALKALEGDADYEAKIFELMDAVDEYIPTPERDTEKPFMMPVEDVFSITGRGTVATGRVERGQVKVGDEVEIIGLQEENGKTTVTGVEMFRKLLDYAEAGDNIGALLRGVSREDIQRGQVLAKPGTITPHSRFKAEVYVLSKEEGGRHTPFFANYRPQFYFRTTDVTGIVHLPEGTEMVMPGDNTEMEVELISTIAIEEGTRFSIREGGRTVGSGVVSSIIK</sequence>
<comment type="function">
    <text evidence="2">GTP hydrolase that promotes the GTP-dependent binding of aminoacyl-tRNA to the A-site of ribosomes during protein biosynthesis.</text>
</comment>
<comment type="catalytic activity">
    <reaction evidence="2">
        <text>GTP + H2O = GDP + phosphate + H(+)</text>
        <dbReference type="Rhea" id="RHEA:19669"/>
        <dbReference type="ChEBI" id="CHEBI:15377"/>
        <dbReference type="ChEBI" id="CHEBI:15378"/>
        <dbReference type="ChEBI" id="CHEBI:37565"/>
        <dbReference type="ChEBI" id="CHEBI:43474"/>
        <dbReference type="ChEBI" id="CHEBI:58189"/>
        <dbReference type="EC" id="3.6.5.3"/>
    </reaction>
    <physiologicalReaction direction="left-to-right" evidence="2">
        <dbReference type="Rhea" id="RHEA:19670"/>
    </physiologicalReaction>
</comment>
<comment type="subunit">
    <text evidence="2">Monomer.</text>
</comment>
<comment type="subcellular location">
    <subcellularLocation>
        <location evidence="2">Cytoplasm</location>
    </subcellularLocation>
</comment>
<comment type="similarity">
    <text evidence="2">Belongs to the TRAFAC class translation factor GTPase superfamily. Classic translation factor GTPase family. EF-Tu/EF-1A subfamily.</text>
</comment>